<proteinExistence type="inferred from homology"/>
<gene>
    <name evidence="1" type="primary">rps17e</name>
    <name type="ordered locus">Msm_0833</name>
</gene>
<protein>
    <recommendedName>
        <fullName evidence="1">Small ribosomal subunit protein eS17</fullName>
    </recommendedName>
    <alternativeName>
        <fullName evidence="2">30S ribosomal protein S17e</fullName>
    </alternativeName>
</protein>
<keyword id="KW-0687">Ribonucleoprotein</keyword>
<keyword id="KW-0689">Ribosomal protein</keyword>
<dbReference type="EMBL" id="CP000678">
    <property type="protein sequence ID" value="ABQ87038.1"/>
    <property type="molecule type" value="Genomic_DNA"/>
</dbReference>
<dbReference type="RefSeq" id="WP_011954113.1">
    <property type="nucleotide sequence ID" value="NZ_CP117965.1"/>
</dbReference>
<dbReference type="SMR" id="A5ULG0"/>
<dbReference type="STRING" id="420247.Msm_0833"/>
<dbReference type="EnsemblBacteria" id="ABQ87038">
    <property type="protein sequence ID" value="ABQ87038"/>
    <property type="gene ID" value="Msm_0833"/>
</dbReference>
<dbReference type="KEGG" id="msi:Msm_0833"/>
<dbReference type="PATRIC" id="fig|420247.28.peg.830"/>
<dbReference type="eggNOG" id="arCOG01885">
    <property type="taxonomic scope" value="Archaea"/>
</dbReference>
<dbReference type="HOGENOM" id="CLU_176720_0_1_2"/>
<dbReference type="Proteomes" id="UP000001992">
    <property type="component" value="Chromosome"/>
</dbReference>
<dbReference type="GO" id="GO:0005829">
    <property type="term" value="C:cytosol"/>
    <property type="evidence" value="ECO:0007669"/>
    <property type="project" value="UniProtKB-ARBA"/>
</dbReference>
<dbReference type="GO" id="GO:1990904">
    <property type="term" value="C:ribonucleoprotein complex"/>
    <property type="evidence" value="ECO:0007669"/>
    <property type="project" value="UniProtKB-KW"/>
</dbReference>
<dbReference type="GO" id="GO:0005840">
    <property type="term" value="C:ribosome"/>
    <property type="evidence" value="ECO:0007669"/>
    <property type="project" value="UniProtKB-KW"/>
</dbReference>
<dbReference type="GO" id="GO:0003735">
    <property type="term" value="F:structural constituent of ribosome"/>
    <property type="evidence" value="ECO:0007669"/>
    <property type="project" value="InterPro"/>
</dbReference>
<dbReference type="GO" id="GO:0006412">
    <property type="term" value="P:translation"/>
    <property type="evidence" value="ECO:0007669"/>
    <property type="project" value="UniProtKB-UniRule"/>
</dbReference>
<dbReference type="Gene3D" id="1.10.60.20">
    <property type="entry name" value="Ribosomal protein S17e-like"/>
    <property type="match status" value="1"/>
</dbReference>
<dbReference type="HAMAP" id="MF_00511">
    <property type="entry name" value="Ribosomal_eS17"/>
    <property type="match status" value="1"/>
</dbReference>
<dbReference type="InterPro" id="IPR001210">
    <property type="entry name" value="Ribosomal_eS17"/>
</dbReference>
<dbReference type="InterPro" id="IPR018273">
    <property type="entry name" value="Ribosomal_eS17_CS"/>
</dbReference>
<dbReference type="InterPro" id="IPR036401">
    <property type="entry name" value="Ribosomal_eS17_sf"/>
</dbReference>
<dbReference type="NCBIfam" id="NF002242">
    <property type="entry name" value="PRK01151.1"/>
    <property type="match status" value="1"/>
</dbReference>
<dbReference type="PANTHER" id="PTHR10732">
    <property type="entry name" value="40S RIBOSOMAL PROTEIN S17"/>
    <property type="match status" value="1"/>
</dbReference>
<dbReference type="PANTHER" id="PTHR10732:SF0">
    <property type="entry name" value="40S RIBOSOMAL PROTEIN S17"/>
    <property type="match status" value="1"/>
</dbReference>
<dbReference type="Pfam" id="PF00833">
    <property type="entry name" value="Ribosomal_S17e"/>
    <property type="match status" value="1"/>
</dbReference>
<dbReference type="SUPFAM" id="SSF116820">
    <property type="entry name" value="Rps17e-like"/>
    <property type="match status" value="1"/>
</dbReference>
<dbReference type="PROSITE" id="PS00712">
    <property type="entry name" value="RIBOSOMAL_S17E"/>
    <property type="match status" value="1"/>
</dbReference>
<reference key="1">
    <citation type="journal article" date="2007" name="Proc. Natl. Acad. Sci. U.S.A.">
        <title>Genomic and metabolic adaptations of Methanobrevibacter smithii to the human gut.</title>
        <authorList>
            <person name="Samuel B.S."/>
            <person name="Hansen E.E."/>
            <person name="Manchester J.K."/>
            <person name="Coutinho P.M."/>
            <person name="Henrissat B."/>
            <person name="Fulton R."/>
            <person name="Latreille P."/>
            <person name="Kim K."/>
            <person name="Wilson R.K."/>
            <person name="Gordon J.I."/>
        </authorList>
    </citation>
    <scope>NUCLEOTIDE SEQUENCE [LARGE SCALE GENOMIC DNA]</scope>
    <source>
        <strain>ATCC 35061 / DSM 861 / OCM 144 / PS</strain>
    </source>
</reference>
<accession>A5ULG0</accession>
<organism>
    <name type="scientific">Methanobrevibacter smithii (strain ATCC 35061 / DSM 861 / OCM 144 / PS)</name>
    <dbReference type="NCBI Taxonomy" id="420247"/>
    <lineage>
        <taxon>Archaea</taxon>
        <taxon>Methanobacteriati</taxon>
        <taxon>Methanobacteriota</taxon>
        <taxon>Methanomada group</taxon>
        <taxon>Methanobacteria</taxon>
        <taxon>Methanobacteriales</taxon>
        <taxon>Methanobacteriaceae</taxon>
        <taxon>Methanobrevibacter</taxon>
    </lineage>
</organism>
<sequence length="65" mass="7600">MGNIRTSFVKRLAKELIETHKGVFTTDFDQNKKLVMEYSTVSTKHLRNKIAGYVTRLVRLEQTQE</sequence>
<name>RS17E_METS3</name>
<comment type="similarity">
    <text evidence="1">Belongs to the eukaryotic ribosomal protein eS17 family.</text>
</comment>
<evidence type="ECO:0000255" key="1">
    <source>
        <dbReference type="HAMAP-Rule" id="MF_00511"/>
    </source>
</evidence>
<evidence type="ECO:0000305" key="2"/>
<feature type="chain" id="PRO_1000050627" description="Small ribosomal subunit protein eS17">
    <location>
        <begin position="1"/>
        <end position="65"/>
    </location>
</feature>